<feature type="chain" id="PRO_0000316900" description="CAI-1 autoinducer synthase">
    <location>
        <begin position="1"/>
        <end position="393"/>
    </location>
</feature>
<feature type="modified residue" description="N6-(pyridoxal phosphate)lysine" evidence="1">
    <location>
        <position position="240"/>
    </location>
</feature>
<dbReference type="EC" id="2.3.-.-"/>
<dbReference type="EMBL" id="AY625893">
    <property type="protein sequence ID" value="AAT86008.1"/>
    <property type="molecule type" value="Genomic_DNA"/>
</dbReference>
<dbReference type="EMBL" id="CP000790">
    <property type="protein sequence ID" value="ABU73981.1"/>
    <property type="status" value="ALT_INIT"/>
    <property type="molecule type" value="Genomic_DNA"/>
</dbReference>
<dbReference type="RefSeq" id="WP_041853530.1">
    <property type="nucleotide sequence ID" value="NC_009784.1"/>
</dbReference>
<dbReference type="SMR" id="A7N6R9"/>
<dbReference type="KEGG" id="vha:VIBHAR_06088"/>
<dbReference type="PATRIC" id="fig|338187.36.peg.4950"/>
<dbReference type="Proteomes" id="UP000008152">
    <property type="component" value="Chromosome II"/>
</dbReference>
<dbReference type="GO" id="GO:0008710">
    <property type="term" value="F:8-amino-7-oxononanoate synthase activity"/>
    <property type="evidence" value="ECO:0007669"/>
    <property type="project" value="TreeGrafter"/>
</dbReference>
<dbReference type="GO" id="GO:0030170">
    <property type="term" value="F:pyridoxal phosphate binding"/>
    <property type="evidence" value="ECO:0007669"/>
    <property type="project" value="InterPro"/>
</dbReference>
<dbReference type="GO" id="GO:0008483">
    <property type="term" value="F:transaminase activity"/>
    <property type="evidence" value="ECO:0007669"/>
    <property type="project" value="UniProtKB-KW"/>
</dbReference>
<dbReference type="GO" id="GO:0009102">
    <property type="term" value="P:biotin biosynthetic process"/>
    <property type="evidence" value="ECO:0007669"/>
    <property type="project" value="TreeGrafter"/>
</dbReference>
<dbReference type="Gene3D" id="3.90.1150.10">
    <property type="entry name" value="Aspartate Aminotransferase, domain 1"/>
    <property type="match status" value="1"/>
</dbReference>
<dbReference type="Gene3D" id="3.40.640.10">
    <property type="entry name" value="Type I PLP-dependent aspartate aminotransferase-like (Major domain)"/>
    <property type="match status" value="1"/>
</dbReference>
<dbReference type="InterPro" id="IPR004839">
    <property type="entry name" value="Aminotransferase_I/II_large"/>
</dbReference>
<dbReference type="InterPro" id="IPR050087">
    <property type="entry name" value="AON_synthase_class-II"/>
</dbReference>
<dbReference type="InterPro" id="IPR015424">
    <property type="entry name" value="PyrdxlP-dep_Trfase"/>
</dbReference>
<dbReference type="InterPro" id="IPR015421">
    <property type="entry name" value="PyrdxlP-dep_Trfase_major"/>
</dbReference>
<dbReference type="InterPro" id="IPR015422">
    <property type="entry name" value="PyrdxlP-dep_Trfase_small"/>
</dbReference>
<dbReference type="NCBIfam" id="NF005526">
    <property type="entry name" value="PRK07179.1"/>
    <property type="match status" value="1"/>
</dbReference>
<dbReference type="PANTHER" id="PTHR13693:SF100">
    <property type="entry name" value="8-AMINO-7-OXONONANOATE SYNTHASE"/>
    <property type="match status" value="1"/>
</dbReference>
<dbReference type="PANTHER" id="PTHR13693">
    <property type="entry name" value="CLASS II AMINOTRANSFERASE/8-AMINO-7-OXONONANOATE SYNTHASE"/>
    <property type="match status" value="1"/>
</dbReference>
<dbReference type="Pfam" id="PF00155">
    <property type="entry name" value="Aminotran_1_2"/>
    <property type="match status" value="1"/>
</dbReference>
<dbReference type="SUPFAM" id="SSF53383">
    <property type="entry name" value="PLP-dependent transferases"/>
    <property type="match status" value="1"/>
</dbReference>
<name>CQSA_VIBC1</name>
<proteinExistence type="evidence at protein level"/>
<keyword id="KW-0012">Acyltransferase</keyword>
<keyword id="KW-0032">Aminotransferase</keyword>
<keyword id="KW-0663">Pyridoxal phosphate</keyword>
<keyword id="KW-0808">Transferase</keyword>
<gene>
    <name type="primary">cqsA</name>
    <name type="ordered locus">VIBHAR_06088</name>
</gene>
<sequence>MSDKPKTKPLPSFVEGRLDFYIQDLIEQNENQKHLVLGKRPQQGAVVMQSNDYLSLSHNLQIQQAHRDAIYEHDDNVVMSAIFLQDDDSKPAFETQLAEYVGMGSCLLSQSGWAANIGLLQTICPPETPVYIDFFAHMSLWEGIRAAGAQAHPFMHNNMNHLRKQIQRNGSGVIVVDSVYSTIGTIAPLRDIYEMAREFDCALVVDESHSLGTHGPNGSGLVKALELTEQVDFITVSLAKTFAYRAGAILGPEKLARTLPFVAFPAIFSSTVLPQEIVRLEKTLEVIRSADDKRTMLFKRAKELRTGLKQIGFHIRSESQIVALECGSERNTERVRDFLEERNVFGAVFCRPATGKNKNIIRFSINADMTSRDIDHVLTACQEAYNHPELEFA</sequence>
<protein>
    <recommendedName>
        <fullName>CAI-1 autoinducer synthase</fullName>
        <ecNumber>2.3.-.-</ecNumber>
    </recommendedName>
    <alternativeName>
        <fullName>Cholerae quorum-sensing autoinducer</fullName>
    </alternativeName>
</protein>
<accession>A7N6R9</accession>
<accession>Q693Z5</accession>
<evidence type="ECO:0000250" key="1"/>
<evidence type="ECO:0000269" key="2">
    <source>
    </source>
</evidence>
<evidence type="ECO:0000305" key="3"/>
<comment type="function">
    <text evidence="2">Required for the synthesis of the quorum-sensing autoinducer CAI-1 ((S)-3-hydroxytridecan-4-one) which probably functions as an intragenus signal.</text>
</comment>
<comment type="cofactor">
    <cofactor evidence="1">
        <name>pyridoxal 5'-phosphate</name>
        <dbReference type="ChEBI" id="CHEBI:597326"/>
    </cofactor>
</comment>
<comment type="similarity">
    <text evidence="3">Belongs to the class-II pyridoxal-phosphate-dependent aminotransferase family.</text>
</comment>
<comment type="sequence caution" evidence="3">
    <conflict type="erroneous initiation">
        <sequence resource="EMBL-CDS" id="ABU73981"/>
    </conflict>
</comment>
<organism>
    <name type="scientific">Vibrio campbellii (strain ATCC BAA-1116)</name>
    <dbReference type="NCBI Taxonomy" id="2902295"/>
    <lineage>
        <taxon>Bacteria</taxon>
        <taxon>Pseudomonadati</taxon>
        <taxon>Pseudomonadota</taxon>
        <taxon>Gammaproteobacteria</taxon>
        <taxon>Vibrionales</taxon>
        <taxon>Vibrionaceae</taxon>
        <taxon>Vibrio</taxon>
    </lineage>
</organism>
<reference key="1">
    <citation type="journal article" date="2004" name="J. Bacteriol.">
        <title>Three parallel quorum-sensing systems regulate gene expression in Vibrio harveyi.</title>
        <authorList>
            <person name="Henke J.M."/>
            <person name="Bassler B.L."/>
        </authorList>
    </citation>
    <scope>NUCLEOTIDE SEQUENCE [GENOMIC DNA]</scope>
    <scope>FUNCTION AS THE CAI-1 SYNTHASE</scope>
</reference>
<reference key="2">
    <citation type="submission" date="2007-08" db="EMBL/GenBank/DDBJ databases">
        <authorList>
            <consortium name="The Vibrio harveyi Genome Sequencing Project"/>
            <person name="Bassler B."/>
            <person name="Clifton S.W."/>
            <person name="Fulton L."/>
            <person name="Delehaunty K."/>
            <person name="Fronick C."/>
            <person name="Harrison M."/>
            <person name="Markivic C."/>
            <person name="Fulton R."/>
            <person name="Tin-Wollam A.-M."/>
            <person name="Shah N."/>
            <person name="Pepin K."/>
            <person name="Nash W."/>
            <person name="Thiruvilangam P."/>
            <person name="Bhonagiri V."/>
            <person name="Waters C."/>
            <person name="Tu K.C."/>
            <person name="Irgon J."/>
            <person name="Wilson R.K."/>
        </authorList>
    </citation>
    <scope>NUCLEOTIDE SEQUENCE [LARGE SCALE GENOMIC DNA]</scope>
    <source>
        <strain>ATCC BAA-1116 / BB120</strain>
    </source>
</reference>